<sequence>MDRSAEFRKWKAQCLSKADLSRKGSVDEDVVELVQFLNMRDQFFTTSSCAGRILLLDRGINGFEVQKQNCCWLLVTHKLCVKDDVIVALKKANGDATLKFEPFVLHVQCRQLQDAQILHSMAIDSGFRNSGITVGKRGKTMLAVRSTHGLEVPLSHKGKLMVTEEYIDFLLNVANQKMEENKKRIERFYNCLQHALERETMTNLHPKIKEKNNSSYIHKKKRNPEKTRAQCITKESDEELENDDDDDLGINVTIFPEDY</sequence>
<reference key="1">
    <citation type="journal article" date="2004" name="Nat. Genet.">
        <title>Complete sequencing and characterization of 21,243 full-length human cDNAs.</title>
        <authorList>
            <person name="Ota T."/>
            <person name="Suzuki Y."/>
            <person name="Nishikawa T."/>
            <person name="Otsuki T."/>
            <person name="Sugiyama T."/>
            <person name="Irie R."/>
            <person name="Wakamatsu A."/>
            <person name="Hayashi K."/>
            <person name="Sato H."/>
            <person name="Nagai K."/>
            <person name="Kimura K."/>
            <person name="Makita H."/>
            <person name="Sekine M."/>
            <person name="Obayashi M."/>
            <person name="Nishi T."/>
            <person name="Shibahara T."/>
            <person name="Tanaka T."/>
            <person name="Ishii S."/>
            <person name="Yamamoto J."/>
            <person name="Saito K."/>
            <person name="Kawai Y."/>
            <person name="Isono Y."/>
            <person name="Nakamura Y."/>
            <person name="Nagahari K."/>
            <person name="Murakami K."/>
            <person name="Yasuda T."/>
            <person name="Iwayanagi T."/>
            <person name="Wagatsuma M."/>
            <person name="Shiratori A."/>
            <person name="Sudo H."/>
            <person name="Hosoiri T."/>
            <person name="Kaku Y."/>
            <person name="Kodaira H."/>
            <person name="Kondo H."/>
            <person name="Sugawara M."/>
            <person name="Takahashi M."/>
            <person name="Kanda K."/>
            <person name="Yokoi T."/>
            <person name="Furuya T."/>
            <person name="Kikkawa E."/>
            <person name="Omura Y."/>
            <person name="Abe K."/>
            <person name="Kamihara K."/>
            <person name="Katsuta N."/>
            <person name="Sato K."/>
            <person name="Tanikawa M."/>
            <person name="Yamazaki M."/>
            <person name="Ninomiya K."/>
            <person name="Ishibashi T."/>
            <person name="Yamashita H."/>
            <person name="Murakawa K."/>
            <person name="Fujimori K."/>
            <person name="Tanai H."/>
            <person name="Kimata M."/>
            <person name="Watanabe M."/>
            <person name="Hiraoka S."/>
            <person name="Chiba Y."/>
            <person name="Ishida S."/>
            <person name="Ono Y."/>
            <person name="Takiguchi S."/>
            <person name="Watanabe S."/>
            <person name="Yosida M."/>
            <person name="Hotuta T."/>
            <person name="Kusano J."/>
            <person name="Kanehori K."/>
            <person name="Takahashi-Fujii A."/>
            <person name="Hara H."/>
            <person name="Tanase T.-O."/>
            <person name="Nomura Y."/>
            <person name="Togiya S."/>
            <person name="Komai F."/>
            <person name="Hara R."/>
            <person name="Takeuchi K."/>
            <person name="Arita M."/>
            <person name="Imose N."/>
            <person name="Musashino K."/>
            <person name="Yuuki H."/>
            <person name="Oshima A."/>
            <person name="Sasaki N."/>
            <person name="Aotsuka S."/>
            <person name="Yoshikawa Y."/>
            <person name="Matsunawa H."/>
            <person name="Ichihara T."/>
            <person name="Shiohata N."/>
            <person name="Sano S."/>
            <person name="Moriya S."/>
            <person name="Momiyama H."/>
            <person name="Satoh N."/>
            <person name="Takami S."/>
            <person name="Terashima Y."/>
            <person name="Suzuki O."/>
            <person name="Nakagawa S."/>
            <person name="Senoh A."/>
            <person name="Mizoguchi H."/>
            <person name="Goto Y."/>
            <person name="Shimizu F."/>
            <person name="Wakebe H."/>
            <person name="Hishigaki H."/>
            <person name="Watanabe T."/>
            <person name="Sugiyama A."/>
            <person name="Takemoto M."/>
            <person name="Kawakami B."/>
            <person name="Yamazaki M."/>
            <person name="Watanabe K."/>
            <person name="Kumagai A."/>
            <person name="Itakura S."/>
            <person name="Fukuzumi Y."/>
            <person name="Fujimori Y."/>
            <person name="Komiyama M."/>
            <person name="Tashiro H."/>
            <person name="Tanigami A."/>
            <person name="Fujiwara T."/>
            <person name="Ono T."/>
            <person name="Yamada K."/>
            <person name="Fujii Y."/>
            <person name="Ozaki K."/>
            <person name="Hirao M."/>
            <person name="Ohmori Y."/>
            <person name="Kawabata A."/>
            <person name="Hikiji T."/>
            <person name="Kobatake N."/>
            <person name="Inagaki H."/>
            <person name="Ikema Y."/>
            <person name="Okamoto S."/>
            <person name="Okitani R."/>
            <person name="Kawakami T."/>
            <person name="Noguchi S."/>
            <person name="Itoh T."/>
            <person name="Shigeta K."/>
            <person name="Senba T."/>
            <person name="Matsumura K."/>
            <person name="Nakajima Y."/>
            <person name="Mizuno T."/>
            <person name="Morinaga M."/>
            <person name="Sasaki M."/>
            <person name="Togashi T."/>
            <person name="Oyama M."/>
            <person name="Hata H."/>
            <person name="Watanabe M."/>
            <person name="Komatsu T."/>
            <person name="Mizushima-Sugano J."/>
            <person name="Satoh T."/>
            <person name="Shirai Y."/>
            <person name="Takahashi Y."/>
            <person name="Nakagawa K."/>
            <person name="Okumura K."/>
            <person name="Nagase T."/>
            <person name="Nomura N."/>
            <person name="Kikuchi H."/>
            <person name="Masuho Y."/>
            <person name="Yamashita R."/>
            <person name="Nakai K."/>
            <person name="Yada T."/>
            <person name="Nakamura Y."/>
            <person name="Ohara O."/>
            <person name="Isogai T."/>
            <person name="Sugano S."/>
        </authorList>
    </citation>
    <scope>NUCLEOTIDE SEQUENCE [LARGE SCALE MRNA] (ISOFORMS 1 AND 2)</scope>
    <scope>VARIANT VAL-121</scope>
    <source>
        <tissue>Brain</tissue>
        <tissue>Uterus</tissue>
    </source>
</reference>
<reference key="2">
    <citation type="journal article" date="2006" name="Nature">
        <title>The DNA sequence and biological annotation of human chromosome 1.</title>
        <authorList>
            <person name="Gregory S.G."/>
            <person name="Barlow K.F."/>
            <person name="McLay K.E."/>
            <person name="Kaul R."/>
            <person name="Swarbreck D."/>
            <person name="Dunham A."/>
            <person name="Scott C.E."/>
            <person name="Howe K.L."/>
            <person name="Woodfine K."/>
            <person name="Spencer C.C.A."/>
            <person name="Jones M.C."/>
            <person name="Gillson C."/>
            <person name="Searle S."/>
            <person name="Zhou Y."/>
            <person name="Kokocinski F."/>
            <person name="McDonald L."/>
            <person name="Evans R."/>
            <person name="Phillips K."/>
            <person name="Atkinson A."/>
            <person name="Cooper R."/>
            <person name="Jones C."/>
            <person name="Hall R.E."/>
            <person name="Andrews T.D."/>
            <person name="Lloyd C."/>
            <person name="Ainscough R."/>
            <person name="Almeida J.P."/>
            <person name="Ambrose K.D."/>
            <person name="Anderson F."/>
            <person name="Andrew R.W."/>
            <person name="Ashwell R.I.S."/>
            <person name="Aubin K."/>
            <person name="Babbage A.K."/>
            <person name="Bagguley C.L."/>
            <person name="Bailey J."/>
            <person name="Beasley H."/>
            <person name="Bethel G."/>
            <person name="Bird C.P."/>
            <person name="Bray-Allen S."/>
            <person name="Brown J.Y."/>
            <person name="Brown A.J."/>
            <person name="Buckley D."/>
            <person name="Burton J."/>
            <person name="Bye J."/>
            <person name="Carder C."/>
            <person name="Chapman J.C."/>
            <person name="Clark S.Y."/>
            <person name="Clarke G."/>
            <person name="Clee C."/>
            <person name="Cobley V."/>
            <person name="Collier R.E."/>
            <person name="Corby N."/>
            <person name="Coville G.J."/>
            <person name="Davies J."/>
            <person name="Deadman R."/>
            <person name="Dunn M."/>
            <person name="Earthrowl M."/>
            <person name="Ellington A.G."/>
            <person name="Errington H."/>
            <person name="Frankish A."/>
            <person name="Frankland J."/>
            <person name="French L."/>
            <person name="Garner P."/>
            <person name="Garnett J."/>
            <person name="Gay L."/>
            <person name="Ghori M.R.J."/>
            <person name="Gibson R."/>
            <person name="Gilby L.M."/>
            <person name="Gillett W."/>
            <person name="Glithero R.J."/>
            <person name="Grafham D.V."/>
            <person name="Griffiths C."/>
            <person name="Griffiths-Jones S."/>
            <person name="Grocock R."/>
            <person name="Hammond S."/>
            <person name="Harrison E.S.I."/>
            <person name="Hart E."/>
            <person name="Haugen E."/>
            <person name="Heath P.D."/>
            <person name="Holmes S."/>
            <person name="Holt K."/>
            <person name="Howden P.J."/>
            <person name="Hunt A.R."/>
            <person name="Hunt S.E."/>
            <person name="Hunter G."/>
            <person name="Isherwood J."/>
            <person name="James R."/>
            <person name="Johnson C."/>
            <person name="Johnson D."/>
            <person name="Joy A."/>
            <person name="Kay M."/>
            <person name="Kershaw J.K."/>
            <person name="Kibukawa M."/>
            <person name="Kimberley A.M."/>
            <person name="King A."/>
            <person name="Knights A.J."/>
            <person name="Lad H."/>
            <person name="Laird G."/>
            <person name="Lawlor S."/>
            <person name="Leongamornlert D.A."/>
            <person name="Lloyd D.M."/>
            <person name="Loveland J."/>
            <person name="Lovell J."/>
            <person name="Lush M.J."/>
            <person name="Lyne R."/>
            <person name="Martin S."/>
            <person name="Mashreghi-Mohammadi M."/>
            <person name="Matthews L."/>
            <person name="Matthews N.S.W."/>
            <person name="McLaren S."/>
            <person name="Milne S."/>
            <person name="Mistry S."/>
            <person name="Moore M.J.F."/>
            <person name="Nickerson T."/>
            <person name="O'Dell C.N."/>
            <person name="Oliver K."/>
            <person name="Palmeiri A."/>
            <person name="Palmer S.A."/>
            <person name="Parker A."/>
            <person name="Patel D."/>
            <person name="Pearce A.V."/>
            <person name="Peck A.I."/>
            <person name="Pelan S."/>
            <person name="Phelps K."/>
            <person name="Phillimore B.J."/>
            <person name="Plumb R."/>
            <person name="Rajan J."/>
            <person name="Raymond C."/>
            <person name="Rouse G."/>
            <person name="Saenphimmachak C."/>
            <person name="Sehra H.K."/>
            <person name="Sheridan E."/>
            <person name="Shownkeen R."/>
            <person name="Sims S."/>
            <person name="Skuce C.D."/>
            <person name="Smith M."/>
            <person name="Steward C."/>
            <person name="Subramanian S."/>
            <person name="Sycamore N."/>
            <person name="Tracey A."/>
            <person name="Tromans A."/>
            <person name="Van Helmond Z."/>
            <person name="Wall M."/>
            <person name="Wallis J.M."/>
            <person name="White S."/>
            <person name="Whitehead S.L."/>
            <person name="Wilkinson J.E."/>
            <person name="Willey D.L."/>
            <person name="Williams H."/>
            <person name="Wilming L."/>
            <person name="Wray P.W."/>
            <person name="Wu Z."/>
            <person name="Coulson A."/>
            <person name="Vaudin M."/>
            <person name="Sulston J.E."/>
            <person name="Durbin R.M."/>
            <person name="Hubbard T."/>
            <person name="Wooster R."/>
            <person name="Dunham I."/>
            <person name="Carter N.P."/>
            <person name="McVean G."/>
            <person name="Ross M.T."/>
            <person name="Harrow J."/>
            <person name="Olson M.V."/>
            <person name="Beck S."/>
            <person name="Rogers J."/>
            <person name="Bentley D.R."/>
        </authorList>
    </citation>
    <scope>NUCLEOTIDE SEQUENCE [LARGE SCALE GENOMIC DNA]</scope>
</reference>
<reference key="3">
    <citation type="journal article" date="2004" name="Genome Res.">
        <title>The status, quality, and expansion of the NIH full-length cDNA project: the Mammalian Gene Collection (MGC).</title>
        <authorList>
            <consortium name="The MGC Project Team"/>
        </authorList>
    </citation>
    <scope>NUCLEOTIDE SEQUENCE [LARGE SCALE MRNA] (ISOFORM 1)</scope>
    <source>
        <tissue>Testis</tissue>
    </source>
</reference>
<reference key="4">
    <citation type="journal article" date="2007" name="BMC Genomics">
        <title>The full-ORF clone resource of the German cDNA consortium.</title>
        <authorList>
            <person name="Bechtel S."/>
            <person name="Rosenfelder H."/>
            <person name="Duda A."/>
            <person name="Schmidt C.P."/>
            <person name="Ernst U."/>
            <person name="Wellenreuther R."/>
            <person name="Mehrle A."/>
            <person name="Schuster C."/>
            <person name="Bahr A."/>
            <person name="Bloecker H."/>
            <person name="Heubner D."/>
            <person name="Hoerlein A."/>
            <person name="Michel G."/>
            <person name="Wedler H."/>
            <person name="Koehrer K."/>
            <person name="Ottenwaelder B."/>
            <person name="Poustka A."/>
            <person name="Wiemann S."/>
            <person name="Schupp I."/>
        </authorList>
    </citation>
    <scope>NUCLEOTIDE SEQUENCE [LARGE SCALE MRNA] OF 156-259</scope>
    <source>
        <tissue>Heart</tissue>
    </source>
</reference>
<name>TYW3_HUMAN</name>
<protein>
    <recommendedName>
        <fullName>tRNA wybutosine-synthesizing protein 3 homolog</fullName>
        <shortName>tRNA-yW-synthesizing protein 3</shortName>
        <ecNumber>2.1.1.282</ecNumber>
    </recommendedName>
    <alternativeName>
        <fullName>tRNA(Phe) 7-((3-amino-3-carboxypropyl)-4-demethylwyosine(37)-N(4))-methyltransferase</fullName>
    </alternativeName>
</protein>
<gene>
    <name type="primary">TYW3</name>
    <name type="synonym">C1orf171</name>
</gene>
<feature type="chain" id="PRO_0000281842" description="tRNA wybutosine-synthesizing protein 3 homolog">
    <location>
        <begin position="1"/>
        <end position="259"/>
    </location>
</feature>
<feature type="modified residue" description="Phosphoserine" evidence="2">
    <location>
        <position position="25"/>
    </location>
</feature>
<feature type="splice variant" id="VSP_044477" description="In isoform 2." evidence="4">
    <location>
        <begin position="86"/>
        <end position="118"/>
    </location>
</feature>
<feature type="sequence variant" id="VAR_031292" description="In dbSNP:rs11538281.">
    <original>R</original>
    <variation>Q</variation>
    <location>
        <position position="110"/>
    </location>
</feature>
<feature type="sequence variant" id="VAR_031293" description="In dbSNP:rs1133891." evidence="3">
    <original>M</original>
    <variation>V</variation>
    <location>
        <position position="121"/>
    </location>
</feature>
<feature type="sequence conflict" description="In Ref. 3; AAH71765." evidence="5" ref="3">
    <original>A</original>
    <variation>V</variation>
    <location>
        <position position="143"/>
    </location>
</feature>
<evidence type="ECO:0000250" key="1"/>
<evidence type="ECO:0000250" key="2">
    <source>
        <dbReference type="UniProtKB" id="Q8BSA9"/>
    </source>
</evidence>
<evidence type="ECO:0000269" key="3">
    <source>
    </source>
</evidence>
<evidence type="ECO:0000303" key="4">
    <source>
    </source>
</evidence>
<evidence type="ECO:0000305" key="5"/>
<organism>
    <name type="scientific">Homo sapiens</name>
    <name type="common">Human</name>
    <dbReference type="NCBI Taxonomy" id="9606"/>
    <lineage>
        <taxon>Eukaryota</taxon>
        <taxon>Metazoa</taxon>
        <taxon>Chordata</taxon>
        <taxon>Craniata</taxon>
        <taxon>Vertebrata</taxon>
        <taxon>Euteleostomi</taxon>
        <taxon>Mammalia</taxon>
        <taxon>Eutheria</taxon>
        <taxon>Euarchontoglires</taxon>
        <taxon>Primates</taxon>
        <taxon>Haplorrhini</taxon>
        <taxon>Catarrhini</taxon>
        <taxon>Hominidae</taxon>
        <taxon>Homo</taxon>
    </lineage>
</organism>
<keyword id="KW-0025">Alternative splicing</keyword>
<keyword id="KW-0489">Methyltransferase</keyword>
<keyword id="KW-0597">Phosphoprotein</keyword>
<keyword id="KW-1267">Proteomics identification</keyword>
<keyword id="KW-1185">Reference proteome</keyword>
<keyword id="KW-0949">S-adenosyl-L-methionine</keyword>
<keyword id="KW-0808">Transferase</keyword>
<keyword id="KW-0819">tRNA processing</keyword>
<accession>Q6IPR3</accession>
<accession>B4DSP9</accession>
<accession>E9PGR7</accession>
<accession>Q5HYJ0</accession>
<accession>Q8N7L1</accession>
<dbReference type="EC" id="2.1.1.282"/>
<dbReference type="EMBL" id="AK098237">
    <property type="protein sequence ID" value="BAC05267.1"/>
    <property type="molecule type" value="mRNA"/>
</dbReference>
<dbReference type="EMBL" id="AK299849">
    <property type="protein sequence ID" value="BAG61711.1"/>
    <property type="molecule type" value="mRNA"/>
</dbReference>
<dbReference type="EMBL" id="AC091611">
    <property type="status" value="NOT_ANNOTATED_CDS"/>
    <property type="molecule type" value="Genomic_DNA"/>
</dbReference>
<dbReference type="EMBL" id="BC071765">
    <property type="protein sequence ID" value="AAH71765.1"/>
    <property type="molecule type" value="mRNA"/>
</dbReference>
<dbReference type="EMBL" id="BX647591">
    <property type="protein sequence ID" value="CAI46106.1"/>
    <property type="status" value="ALT_INIT"/>
    <property type="molecule type" value="mRNA"/>
</dbReference>
<dbReference type="CCDS" id="CCDS53334.1">
    <molecule id="Q6IPR3-2"/>
</dbReference>
<dbReference type="CCDS" id="CCDS666.1">
    <molecule id="Q6IPR3-1"/>
</dbReference>
<dbReference type="RefSeq" id="NP_001156388.1">
    <molecule id="Q6IPR3-2"/>
    <property type="nucleotide sequence ID" value="NM_001162916.2"/>
</dbReference>
<dbReference type="RefSeq" id="NP_612476.1">
    <molecule id="Q6IPR3-1"/>
    <property type="nucleotide sequence ID" value="NM_138467.3"/>
</dbReference>
<dbReference type="RefSeq" id="XP_006710410.1">
    <molecule id="Q6IPR3-1"/>
    <property type="nucleotide sequence ID" value="XM_006710347.3"/>
</dbReference>
<dbReference type="SMR" id="Q6IPR3"/>
<dbReference type="BioGRID" id="126045">
    <property type="interactions" value="58"/>
</dbReference>
<dbReference type="FunCoup" id="Q6IPR3">
    <property type="interactions" value="942"/>
</dbReference>
<dbReference type="IntAct" id="Q6IPR3">
    <property type="interactions" value="50"/>
</dbReference>
<dbReference type="STRING" id="9606.ENSP00000359904"/>
<dbReference type="iPTMnet" id="Q6IPR3"/>
<dbReference type="PhosphoSitePlus" id="Q6IPR3"/>
<dbReference type="BioMuta" id="TYW3"/>
<dbReference type="DMDM" id="224471865"/>
<dbReference type="jPOST" id="Q6IPR3"/>
<dbReference type="MassIVE" id="Q6IPR3"/>
<dbReference type="PaxDb" id="9606-ENSP00000359904"/>
<dbReference type="PeptideAtlas" id="Q6IPR3"/>
<dbReference type="ProteomicsDB" id="20378"/>
<dbReference type="ProteomicsDB" id="66456">
    <molecule id="Q6IPR3-1"/>
</dbReference>
<dbReference type="Pumba" id="Q6IPR3"/>
<dbReference type="Antibodypedia" id="33463">
    <property type="antibodies" value="52 antibodies from 19 providers"/>
</dbReference>
<dbReference type="DNASU" id="127253"/>
<dbReference type="Ensembl" id="ENST00000370867.8">
    <molecule id="Q6IPR3-1"/>
    <property type="protein sequence ID" value="ENSP00000359904.3"/>
    <property type="gene ID" value="ENSG00000162623.16"/>
</dbReference>
<dbReference type="Ensembl" id="ENST00000457880.6">
    <molecule id="Q6IPR3-2"/>
    <property type="protein sequence ID" value="ENSP00000407025.2"/>
    <property type="gene ID" value="ENSG00000162623.16"/>
</dbReference>
<dbReference type="GeneID" id="127253"/>
<dbReference type="KEGG" id="hsa:127253"/>
<dbReference type="MANE-Select" id="ENST00000370867.8">
    <property type="protein sequence ID" value="ENSP00000359904.3"/>
    <property type="RefSeq nucleotide sequence ID" value="NM_138467.3"/>
    <property type="RefSeq protein sequence ID" value="NP_612476.1"/>
</dbReference>
<dbReference type="UCSC" id="uc001dgn.4">
    <molecule id="Q6IPR3-1"/>
    <property type="organism name" value="human"/>
</dbReference>
<dbReference type="AGR" id="HGNC:24757"/>
<dbReference type="CTD" id="127253"/>
<dbReference type="DisGeNET" id="127253"/>
<dbReference type="GeneCards" id="TYW3"/>
<dbReference type="HGNC" id="HGNC:24757">
    <property type="gene designation" value="TYW3"/>
</dbReference>
<dbReference type="HPA" id="ENSG00000162623">
    <property type="expression patterns" value="Low tissue specificity"/>
</dbReference>
<dbReference type="MIM" id="611245">
    <property type="type" value="gene"/>
</dbReference>
<dbReference type="neXtProt" id="NX_Q6IPR3"/>
<dbReference type="OpenTargets" id="ENSG00000162623"/>
<dbReference type="PharmGKB" id="PA142672420"/>
<dbReference type="VEuPathDB" id="HostDB:ENSG00000162623"/>
<dbReference type="eggNOG" id="KOG1228">
    <property type="taxonomic scope" value="Eukaryota"/>
</dbReference>
<dbReference type="GeneTree" id="ENSGT00940000153304"/>
<dbReference type="HOGENOM" id="CLU_047426_1_1_1"/>
<dbReference type="InParanoid" id="Q6IPR3"/>
<dbReference type="OMA" id="TWLYVSH"/>
<dbReference type="OrthoDB" id="263283at2759"/>
<dbReference type="PAN-GO" id="Q6IPR3">
    <property type="GO annotations" value="3 GO annotations based on evolutionary models"/>
</dbReference>
<dbReference type="PhylomeDB" id="Q6IPR3"/>
<dbReference type="TreeFam" id="TF329327"/>
<dbReference type="PathwayCommons" id="Q6IPR3"/>
<dbReference type="Reactome" id="R-HSA-6782861">
    <property type="pathway name" value="Synthesis of wybutosine at G37 of tRNA(Phe)"/>
</dbReference>
<dbReference type="SignaLink" id="Q6IPR3"/>
<dbReference type="UniPathway" id="UPA00375"/>
<dbReference type="BioGRID-ORCS" id="127253">
    <property type="hits" value="12 hits in 1149 CRISPR screens"/>
</dbReference>
<dbReference type="ChiTaRS" id="TYW3">
    <property type="organism name" value="human"/>
</dbReference>
<dbReference type="GenomeRNAi" id="127253"/>
<dbReference type="Pharos" id="Q6IPR3">
    <property type="development level" value="Tdark"/>
</dbReference>
<dbReference type="PRO" id="PR:Q6IPR3"/>
<dbReference type="Proteomes" id="UP000005640">
    <property type="component" value="Chromosome 1"/>
</dbReference>
<dbReference type="RNAct" id="Q6IPR3">
    <property type="molecule type" value="protein"/>
</dbReference>
<dbReference type="Bgee" id="ENSG00000162623">
    <property type="expression patterns" value="Expressed in epithelial cell of pancreas and 169 other cell types or tissues"/>
</dbReference>
<dbReference type="ExpressionAtlas" id="Q6IPR3">
    <property type="expression patterns" value="baseline and differential"/>
</dbReference>
<dbReference type="GO" id="GO:0005737">
    <property type="term" value="C:cytoplasm"/>
    <property type="evidence" value="ECO:0000318"/>
    <property type="project" value="GO_Central"/>
</dbReference>
<dbReference type="GO" id="GO:0008175">
    <property type="term" value="F:tRNA methyltransferase activity"/>
    <property type="evidence" value="ECO:0000318"/>
    <property type="project" value="GO_Central"/>
</dbReference>
<dbReference type="GO" id="GO:0030488">
    <property type="term" value="P:tRNA methylation"/>
    <property type="evidence" value="ECO:0000318"/>
    <property type="project" value="GO_Central"/>
</dbReference>
<dbReference type="GO" id="GO:0031591">
    <property type="term" value="P:wybutosine biosynthetic process"/>
    <property type="evidence" value="ECO:0000318"/>
    <property type="project" value="GO_Central"/>
</dbReference>
<dbReference type="FunFam" id="3.30.1960.10:FF:000001">
    <property type="entry name" value="tRNA wybutosine-synthesizing protein 3 homolog"/>
    <property type="match status" value="1"/>
</dbReference>
<dbReference type="Gene3D" id="3.30.1960.10">
    <property type="entry name" value="tRNA wybutosine-synthesizing-like"/>
    <property type="match status" value="1"/>
</dbReference>
<dbReference type="InterPro" id="IPR003827">
    <property type="entry name" value="tRNA_yW-synthesising"/>
</dbReference>
<dbReference type="InterPro" id="IPR036602">
    <property type="entry name" value="tRNA_yW-synthesising-like_sf"/>
</dbReference>
<dbReference type="PANTHER" id="PTHR48418">
    <property type="entry name" value="TRNA WYBUTOSINE-SYNTHESIZING PROTEIN 3"/>
    <property type="match status" value="1"/>
</dbReference>
<dbReference type="PANTHER" id="PTHR48418:SF1">
    <property type="entry name" value="TRNA WYBUTOSINE-SYNTHESIZING PROTEIN 3"/>
    <property type="match status" value="1"/>
</dbReference>
<dbReference type="Pfam" id="PF02676">
    <property type="entry name" value="TYW3"/>
    <property type="match status" value="1"/>
</dbReference>
<dbReference type="SUPFAM" id="SSF111278">
    <property type="entry name" value="SSo0622-like"/>
    <property type="match status" value="1"/>
</dbReference>
<comment type="function">
    <text evidence="1">Probable S-adenosyl-L-methionine-dependent methyltransferase that acts as a component of the wybutosine biosynthesis pathway. Wybutosine is a hyper modified guanosine with a tricyclic base found at the 3'-position adjacent to the anticodon of eukaryotic phenylalanine tRNA (By similarity).</text>
</comment>
<comment type="catalytic activity">
    <reaction>
        <text>4-demethyl-7-[(3S)-3-amino-3-carboxypropyl]wyosine(37) in tRNA(Phe) + S-adenosyl-L-methionine = 7-[(3S)-3-amino-3-carboxypropyl]wyosine(37) in tRNA(Phe) + S-adenosyl-L-homocysteine + H(+)</text>
        <dbReference type="Rhea" id="RHEA:36635"/>
        <dbReference type="Rhea" id="RHEA-COMP:10378"/>
        <dbReference type="Rhea" id="RHEA-COMP:10379"/>
        <dbReference type="ChEBI" id="CHEBI:15378"/>
        <dbReference type="ChEBI" id="CHEBI:57856"/>
        <dbReference type="ChEBI" id="CHEBI:59789"/>
        <dbReference type="ChEBI" id="CHEBI:73543"/>
        <dbReference type="ChEBI" id="CHEBI:73550"/>
        <dbReference type="EC" id="2.1.1.282"/>
    </reaction>
</comment>
<comment type="pathway">
    <text>tRNA modification; wybutosine-tRNA(Phe) biosynthesis.</text>
</comment>
<comment type="interaction">
    <interactant intactId="EBI-10974426">
        <id>Q6IPR3</id>
    </interactant>
    <interactant intactId="EBI-742054">
        <id>Q96D03</id>
        <label>DDIT4L</label>
    </interactant>
    <organismsDiffer>false</organismsDiffer>
    <experiments>3</experiments>
</comment>
<comment type="interaction">
    <interactant intactId="EBI-10974426">
        <id>Q6IPR3</id>
    </interactant>
    <interactant intactId="EBI-79165">
        <id>Q9NRD5</id>
        <label>PICK1</label>
    </interactant>
    <organismsDiffer>false</organismsDiffer>
    <experiments>3</experiments>
</comment>
<comment type="alternative products">
    <event type="alternative splicing"/>
    <isoform>
        <id>Q6IPR3-1</id>
        <name>1</name>
        <sequence type="displayed"/>
    </isoform>
    <isoform>
        <id>Q6IPR3-2</id>
        <name>2</name>
        <sequence type="described" ref="VSP_044477"/>
    </isoform>
</comment>
<comment type="similarity">
    <text evidence="5">Belongs to the TYW3 family.</text>
</comment>
<comment type="sequence caution" evidence="5">
    <conflict type="erroneous initiation">
        <sequence resource="EMBL-CDS" id="CAI46106"/>
    </conflict>
</comment>
<proteinExistence type="evidence at protein level"/>